<evidence type="ECO:0000255" key="1">
    <source>
        <dbReference type="HAMAP-Rule" id="MF_01841"/>
    </source>
</evidence>
<gene>
    <name evidence="1" type="primary">aguA</name>
    <name type="ordered locus">ECA4273</name>
</gene>
<organism>
    <name type="scientific">Pectobacterium atrosepticum (strain SCRI 1043 / ATCC BAA-672)</name>
    <name type="common">Erwinia carotovora subsp. atroseptica</name>
    <dbReference type="NCBI Taxonomy" id="218491"/>
    <lineage>
        <taxon>Bacteria</taxon>
        <taxon>Pseudomonadati</taxon>
        <taxon>Pseudomonadota</taxon>
        <taxon>Gammaproteobacteria</taxon>
        <taxon>Enterobacterales</taxon>
        <taxon>Pectobacteriaceae</taxon>
        <taxon>Pectobacterium</taxon>
    </lineage>
</organism>
<feature type="chain" id="PRO_0000194325" description="Putative agmatine deiminase">
    <location>
        <begin position="1"/>
        <end position="368"/>
    </location>
</feature>
<feature type="active site" description="Amidino-cysteine intermediate" evidence="1">
    <location>
        <position position="359"/>
    </location>
</feature>
<proteinExistence type="inferred from homology"/>
<dbReference type="EC" id="3.5.3.12" evidence="1"/>
<dbReference type="EMBL" id="BX950851">
    <property type="protein sequence ID" value="CAG77170.1"/>
    <property type="molecule type" value="Genomic_DNA"/>
</dbReference>
<dbReference type="SMR" id="Q6CZ80"/>
<dbReference type="STRING" id="218491.ECA4273"/>
<dbReference type="KEGG" id="eca:ECA4273"/>
<dbReference type="eggNOG" id="COG2957">
    <property type="taxonomic scope" value="Bacteria"/>
</dbReference>
<dbReference type="HOGENOM" id="CLU_037682_1_0_6"/>
<dbReference type="Proteomes" id="UP000007966">
    <property type="component" value="Chromosome"/>
</dbReference>
<dbReference type="GO" id="GO:0047632">
    <property type="term" value="F:agmatine deiminase activity"/>
    <property type="evidence" value="ECO:0007669"/>
    <property type="project" value="UniProtKB-UniRule"/>
</dbReference>
<dbReference type="GO" id="GO:0004668">
    <property type="term" value="F:protein-arginine deiminase activity"/>
    <property type="evidence" value="ECO:0007669"/>
    <property type="project" value="InterPro"/>
</dbReference>
<dbReference type="GO" id="GO:0009446">
    <property type="term" value="P:putrescine biosynthetic process"/>
    <property type="evidence" value="ECO:0007669"/>
    <property type="project" value="InterPro"/>
</dbReference>
<dbReference type="Gene3D" id="3.75.10.10">
    <property type="entry name" value="L-arginine/glycine Amidinotransferase, Chain A"/>
    <property type="match status" value="1"/>
</dbReference>
<dbReference type="HAMAP" id="MF_01841">
    <property type="entry name" value="Agmatine_deimin"/>
    <property type="match status" value="1"/>
</dbReference>
<dbReference type="InterPro" id="IPR017754">
    <property type="entry name" value="Agmatine_deiminase"/>
</dbReference>
<dbReference type="InterPro" id="IPR007466">
    <property type="entry name" value="Peptidyl-Arg-deiminase_porph"/>
</dbReference>
<dbReference type="NCBIfam" id="TIGR03380">
    <property type="entry name" value="agmatine_aguA"/>
    <property type="match status" value="1"/>
</dbReference>
<dbReference type="NCBIfam" id="NF010070">
    <property type="entry name" value="PRK13551.1"/>
    <property type="match status" value="1"/>
</dbReference>
<dbReference type="PANTHER" id="PTHR31377">
    <property type="entry name" value="AGMATINE DEIMINASE-RELATED"/>
    <property type="match status" value="1"/>
</dbReference>
<dbReference type="PANTHER" id="PTHR31377:SF0">
    <property type="entry name" value="AGMATINE DEIMINASE-RELATED"/>
    <property type="match status" value="1"/>
</dbReference>
<dbReference type="Pfam" id="PF04371">
    <property type="entry name" value="PAD_porph"/>
    <property type="match status" value="1"/>
</dbReference>
<dbReference type="SUPFAM" id="SSF55909">
    <property type="entry name" value="Pentein"/>
    <property type="match status" value="1"/>
</dbReference>
<accession>Q6CZ80</accession>
<sequence>MMSQLAAPHVTTPHQDGFAMPAEWAPHDAVWMIWPYRTDNWREQGVPAQKTFARVAEAIAQNTPVIMGVPARYMADAQKVMPVNVTLVEMESDDAWMRDTGPTIVLNQAGERRGIDWQFNAWGGELGGLYEDWRQDEKVAAQVLDYHQAAGYAAPLILEGGSIHVDGEGTLLTTAECLLNPNRNPHLSKAEIEQLMRDYLSISTIIWLEEGVYNDETDGHIDNMCCFVRPGEVALHWTDDENDPQYARSVAAYEVLSAARDAQGRELKIWKLPAPGPLHATKEEAQGVDSGDAVERLAGSRLAGSYVNFLISNQQIIFPLLDEKTDDVARDLLQQMFPDYLISGVPAREILLGGGNIHCITQQIPTAK</sequence>
<comment type="catalytic activity">
    <reaction evidence="1">
        <text>agmatine + H2O = N-carbamoylputrescine + NH4(+)</text>
        <dbReference type="Rhea" id="RHEA:18037"/>
        <dbReference type="ChEBI" id="CHEBI:15377"/>
        <dbReference type="ChEBI" id="CHEBI:28938"/>
        <dbReference type="ChEBI" id="CHEBI:58145"/>
        <dbReference type="ChEBI" id="CHEBI:58318"/>
        <dbReference type="EC" id="3.5.3.12"/>
    </reaction>
</comment>
<comment type="similarity">
    <text evidence="1">Belongs to the agmatine deiminase family.</text>
</comment>
<keyword id="KW-0378">Hydrolase</keyword>
<keyword id="KW-1185">Reference proteome</keyword>
<name>AGUA_PECAS</name>
<protein>
    <recommendedName>
        <fullName evidence="1">Putative agmatine deiminase</fullName>
        <ecNumber evidence="1">3.5.3.12</ecNumber>
    </recommendedName>
    <alternativeName>
        <fullName evidence="1">Agmatine iminohydrolase</fullName>
    </alternativeName>
</protein>
<reference key="1">
    <citation type="journal article" date="2004" name="Proc. Natl. Acad. Sci. U.S.A.">
        <title>Genome sequence of the enterobacterial phytopathogen Erwinia carotovora subsp. atroseptica and characterization of virulence factors.</title>
        <authorList>
            <person name="Bell K.S."/>
            <person name="Sebaihia M."/>
            <person name="Pritchard L."/>
            <person name="Holden M.T.G."/>
            <person name="Hyman L.J."/>
            <person name="Holeva M.C."/>
            <person name="Thomson N.R."/>
            <person name="Bentley S.D."/>
            <person name="Churcher L.J.C."/>
            <person name="Mungall K."/>
            <person name="Atkin R."/>
            <person name="Bason N."/>
            <person name="Brooks K."/>
            <person name="Chillingworth T."/>
            <person name="Clark K."/>
            <person name="Doggett J."/>
            <person name="Fraser A."/>
            <person name="Hance Z."/>
            <person name="Hauser H."/>
            <person name="Jagels K."/>
            <person name="Moule S."/>
            <person name="Norbertczak H."/>
            <person name="Ormond D."/>
            <person name="Price C."/>
            <person name="Quail M.A."/>
            <person name="Sanders M."/>
            <person name="Walker D."/>
            <person name="Whitehead S."/>
            <person name="Salmond G.P.C."/>
            <person name="Birch P.R.J."/>
            <person name="Parkhill J."/>
            <person name="Toth I.K."/>
        </authorList>
    </citation>
    <scope>NUCLEOTIDE SEQUENCE [LARGE SCALE GENOMIC DNA]</scope>
    <source>
        <strain>SCRI 1043 / ATCC BAA-672</strain>
    </source>
</reference>